<gene>
    <name type="primary">samkC</name>
    <name type="synonym">SAMK-C</name>
    <name type="synonym">smkC</name>
    <name type="ORF">DDB_G0270678</name>
</gene>
<sequence length="875" mass="99725">METTTITSILDDNNNNNNNNNNNNNNNNNNNNNNNNNNNNNNNNNYNYKEWDNEMVCKWLHDTKRIQKVSIEIFKANEITGNYLESLTDKMLLKMGLTIRDLLSFRSEFDDLKNIFNETNLYNNIQKNSIDYSIDNNNLNNLNNNNNNNNNNNNNNNNNNNNNNNNNNKTIKAPTIDISQYVFIKQMKGSVNCSLEKYINKKTKERILIKRIGKSNINEETIINEISILCSIDHPNIIKTYGYYKDENYYYVASKFYPKGSIKTKSKSTPYNEINAKKVFGKVLKAIDYLHSLDPPIIHRDINSDNILFDENDEPILIDFGLSYKELKDDNNNDDDNYDNHNHNHNHNHNHNHDNDNDNDTNVKIKTQCMEPRWPSPEIHREPPHFSKESDIFSFGCTLFEILGYIITTPIIILPSIPSGMSLECQILFNETTKIDSCFRPTSKQLLNFSWFKETALLTSSEPQPLEPQPQPKPQTSQSKPKPSSSLSSSELPPQPPLESQSKPKPSQSKTQPTQPQSKLNPSSPPSSSSSSLSEPPKPQPSQSKPKPSSSLSSEPPPLEPQPKPQTSQSKPKPSSSLSSSEPPPLEPQPTQSSKPQPSQSKPQPIQSQPTQPQPTQPKSSKQQPQSKQQQQQQQQQQQQQQQQQQQQQQQQKSKPEQSKSKPEQSQSKPQPGQPLQSPSKPQPIPSTTKTTTTTTTTTTPNNNNNNNNNNNNNNNNNNNNIITSINLIECFKKNNSKIIISKDMEFDNPYEKTLHEKHLLKLGISDCKQININHKYFKKVLSFLNSHLTSALQMKMGPYQVDIAPEFDNIFKTLFISLVLEKIDKDTLLKGGKDLGDTSSTLILYTFYYFLSNTLIYQIILHKPTSFKLVGKLK</sequence>
<protein>
    <recommendedName>
        <fullName>Probable serine/threonine-protein kinase samkC</fullName>
        <ecNumber>2.7.11.1</ecNumber>
    </recommendedName>
    <alternativeName>
        <fullName>SAM domain-containing protein kinase C</fullName>
    </alternativeName>
</protein>
<reference key="1">
    <citation type="journal article" date="2005" name="Nature">
        <title>The genome of the social amoeba Dictyostelium discoideum.</title>
        <authorList>
            <person name="Eichinger L."/>
            <person name="Pachebat J.A."/>
            <person name="Gloeckner G."/>
            <person name="Rajandream M.A."/>
            <person name="Sucgang R."/>
            <person name="Berriman M."/>
            <person name="Song J."/>
            <person name="Olsen R."/>
            <person name="Szafranski K."/>
            <person name="Xu Q."/>
            <person name="Tunggal B."/>
            <person name="Kummerfeld S."/>
            <person name="Madera M."/>
            <person name="Konfortov B.A."/>
            <person name="Rivero F."/>
            <person name="Bankier A.T."/>
            <person name="Lehmann R."/>
            <person name="Hamlin N."/>
            <person name="Davies R."/>
            <person name="Gaudet P."/>
            <person name="Fey P."/>
            <person name="Pilcher K."/>
            <person name="Chen G."/>
            <person name="Saunders D."/>
            <person name="Sodergren E.J."/>
            <person name="Davis P."/>
            <person name="Kerhornou A."/>
            <person name="Nie X."/>
            <person name="Hall N."/>
            <person name="Anjard C."/>
            <person name="Hemphill L."/>
            <person name="Bason N."/>
            <person name="Farbrother P."/>
            <person name="Desany B."/>
            <person name="Just E."/>
            <person name="Morio T."/>
            <person name="Rost R."/>
            <person name="Churcher C.M."/>
            <person name="Cooper J."/>
            <person name="Haydock S."/>
            <person name="van Driessche N."/>
            <person name="Cronin A."/>
            <person name="Goodhead I."/>
            <person name="Muzny D.M."/>
            <person name="Mourier T."/>
            <person name="Pain A."/>
            <person name="Lu M."/>
            <person name="Harper D."/>
            <person name="Lindsay R."/>
            <person name="Hauser H."/>
            <person name="James K.D."/>
            <person name="Quiles M."/>
            <person name="Madan Babu M."/>
            <person name="Saito T."/>
            <person name="Buchrieser C."/>
            <person name="Wardroper A."/>
            <person name="Felder M."/>
            <person name="Thangavelu M."/>
            <person name="Johnson D."/>
            <person name="Knights A."/>
            <person name="Loulseged H."/>
            <person name="Mungall K.L."/>
            <person name="Oliver K."/>
            <person name="Price C."/>
            <person name="Quail M.A."/>
            <person name="Urushihara H."/>
            <person name="Hernandez J."/>
            <person name="Rabbinowitsch E."/>
            <person name="Steffen D."/>
            <person name="Sanders M."/>
            <person name="Ma J."/>
            <person name="Kohara Y."/>
            <person name="Sharp S."/>
            <person name="Simmonds M.N."/>
            <person name="Spiegler S."/>
            <person name="Tivey A."/>
            <person name="Sugano S."/>
            <person name="White B."/>
            <person name="Walker D."/>
            <person name="Woodward J.R."/>
            <person name="Winckler T."/>
            <person name="Tanaka Y."/>
            <person name="Shaulsky G."/>
            <person name="Schleicher M."/>
            <person name="Weinstock G.M."/>
            <person name="Rosenthal A."/>
            <person name="Cox E.C."/>
            <person name="Chisholm R.L."/>
            <person name="Gibbs R.A."/>
            <person name="Loomis W.F."/>
            <person name="Platzer M."/>
            <person name="Kay R.R."/>
            <person name="Williams J.G."/>
            <person name="Dear P.H."/>
            <person name="Noegel A.A."/>
            <person name="Barrell B.G."/>
            <person name="Kuspa A."/>
        </authorList>
    </citation>
    <scope>NUCLEOTIDE SEQUENCE [LARGE SCALE GENOMIC DNA]</scope>
    <source>
        <strain>AX4</strain>
    </source>
</reference>
<organism>
    <name type="scientific">Dictyostelium discoideum</name>
    <name type="common">Social amoeba</name>
    <dbReference type="NCBI Taxonomy" id="44689"/>
    <lineage>
        <taxon>Eukaryota</taxon>
        <taxon>Amoebozoa</taxon>
        <taxon>Evosea</taxon>
        <taxon>Eumycetozoa</taxon>
        <taxon>Dictyostelia</taxon>
        <taxon>Dictyosteliales</taxon>
        <taxon>Dictyosteliaceae</taxon>
        <taxon>Dictyostelium</taxon>
    </lineage>
</organism>
<feature type="chain" id="PRO_0000362032" description="Probable serine/threonine-protein kinase samkC">
    <location>
        <begin position="1"/>
        <end position="875"/>
    </location>
</feature>
<feature type="transmembrane region" description="Helical" evidence="1">
    <location>
        <begin position="842"/>
        <end position="862"/>
    </location>
</feature>
<feature type="domain" description="SAM" evidence="3">
    <location>
        <begin position="51"/>
        <end position="116"/>
    </location>
</feature>
<feature type="domain" description="Protein kinase" evidence="2">
    <location>
        <begin position="181"/>
        <end position="452"/>
    </location>
</feature>
<feature type="region of interest" description="Disordered" evidence="4">
    <location>
        <begin position="1"/>
        <end position="47"/>
    </location>
</feature>
<feature type="region of interest" description="Disordered" evidence="4">
    <location>
        <begin position="136"/>
        <end position="170"/>
    </location>
</feature>
<feature type="region of interest" description="Disordered" evidence="4">
    <location>
        <begin position="331"/>
        <end position="362"/>
    </location>
</feature>
<feature type="region of interest" description="Disordered" evidence="4">
    <location>
        <begin position="461"/>
        <end position="718"/>
    </location>
</feature>
<feature type="coiled-coil region" evidence="1">
    <location>
        <begin position="135"/>
        <end position="162"/>
    </location>
</feature>
<feature type="coiled-coil region" evidence="1">
    <location>
        <begin position="626"/>
        <end position="655"/>
    </location>
</feature>
<feature type="compositionally biased region" description="Polar residues" evidence="4">
    <location>
        <begin position="1"/>
        <end position="12"/>
    </location>
</feature>
<feature type="compositionally biased region" description="Low complexity" evidence="4">
    <location>
        <begin position="13"/>
        <end position="45"/>
    </location>
</feature>
<feature type="compositionally biased region" description="Low complexity" evidence="4">
    <location>
        <begin position="136"/>
        <end position="168"/>
    </location>
</feature>
<feature type="compositionally biased region" description="Low complexity" evidence="4">
    <location>
        <begin position="474"/>
        <end position="554"/>
    </location>
</feature>
<feature type="compositionally biased region" description="Pro residues" evidence="4">
    <location>
        <begin position="555"/>
        <end position="564"/>
    </location>
</feature>
<feature type="compositionally biased region" description="Low complexity" evidence="4">
    <location>
        <begin position="565"/>
        <end position="581"/>
    </location>
</feature>
<feature type="compositionally biased region" description="Low complexity" evidence="4">
    <location>
        <begin position="589"/>
        <end position="611"/>
    </location>
</feature>
<feature type="compositionally biased region" description="Low complexity" evidence="4">
    <location>
        <begin position="617"/>
        <end position="653"/>
    </location>
</feature>
<feature type="compositionally biased region" description="Basic and acidic residues" evidence="4">
    <location>
        <begin position="654"/>
        <end position="663"/>
    </location>
</feature>
<feature type="compositionally biased region" description="Low complexity" evidence="4">
    <location>
        <begin position="664"/>
        <end position="718"/>
    </location>
</feature>
<feature type="active site" description="Proton acceptor" evidence="2">
    <location>
        <position position="301"/>
    </location>
</feature>
<feature type="binding site" evidence="2">
    <location>
        <begin position="187"/>
        <end position="195"/>
    </location>
    <ligand>
        <name>ATP</name>
        <dbReference type="ChEBI" id="CHEBI:30616"/>
    </ligand>
</feature>
<feature type="binding site" evidence="2">
    <location>
        <position position="210"/>
    </location>
    <ligand>
        <name>ATP</name>
        <dbReference type="ChEBI" id="CHEBI:30616"/>
    </ligand>
</feature>
<accession>Q55CW2</accession>
<name>SAMKC_DICDI</name>
<comment type="catalytic activity">
    <reaction>
        <text>L-seryl-[protein] + ATP = O-phospho-L-seryl-[protein] + ADP + H(+)</text>
        <dbReference type="Rhea" id="RHEA:17989"/>
        <dbReference type="Rhea" id="RHEA-COMP:9863"/>
        <dbReference type="Rhea" id="RHEA-COMP:11604"/>
        <dbReference type="ChEBI" id="CHEBI:15378"/>
        <dbReference type="ChEBI" id="CHEBI:29999"/>
        <dbReference type="ChEBI" id="CHEBI:30616"/>
        <dbReference type="ChEBI" id="CHEBI:83421"/>
        <dbReference type="ChEBI" id="CHEBI:456216"/>
        <dbReference type="EC" id="2.7.11.1"/>
    </reaction>
</comment>
<comment type="catalytic activity">
    <reaction>
        <text>L-threonyl-[protein] + ATP = O-phospho-L-threonyl-[protein] + ADP + H(+)</text>
        <dbReference type="Rhea" id="RHEA:46608"/>
        <dbReference type="Rhea" id="RHEA-COMP:11060"/>
        <dbReference type="Rhea" id="RHEA-COMP:11605"/>
        <dbReference type="ChEBI" id="CHEBI:15378"/>
        <dbReference type="ChEBI" id="CHEBI:30013"/>
        <dbReference type="ChEBI" id="CHEBI:30616"/>
        <dbReference type="ChEBI" id="CHEBI:61977"/>
        <dbReference type="ChEBI" id="CHEBI:456216"/>
        <dbReference type="EC" id="2.7.11.1"/>
    </reaction>
</comment>
<comment type="subcellular location">
    <subcellularLocation>
        <location evidence="5">Membrane</location>
        <topology evidence="5">Single-pass membrane protein</topology>
    </subcellularLocation>
</comment>
<comment type="similarity">
    <text evidence="2">Belongs to the protein kinase superfamily. Ser/Thr protein kinase family.</text>
</comment>
<dbReference type="EC" id="2.7.11.1"/>
<dbReference type="EMBL" id="AAFI02000005">
    <property type="protein sequence ID" value="EAL72689.2"/>
    <property type="molecule type" value="Genomic_DNA"/>
</dbReference>
<dbReference type="RefSeq" id="XP_646369.2">
    <property type="nucleotide sequence ID" value="XM_641277.2"/>
</dbReference>
<dbReference type="SMR" id="Q55CW2"/>
<dbReference type="STRING" id="44689.Q55CW2"/>
<dbReference type="GlyGen" id="Q55CW2">
    <property type="glycosylation" value="2 sites"/>
</dbReference>
<dbReference type="PaxDb" id="44689-DDB0229990"/>
<dbReference type="EnsemblProtists" id="EAL72689">
    <property type="protein sequence ID" value="EAL72689"/>
    <property type="gene ID" value="DDB_G0270678"/>
</dbReference>
<dbReference type="GeneID" id="8617324"/>
<dbReference type="KEGG" id="ddi:DDB_G0270678"/>
<dbReference type="dictyBase" id="DDB_G0270678">
    <property type="gene designation" value="samkC"/>
</dbReference>
<dbReference type="VEuPathDB" id="AmoebaDB:DDB_G0270678"/>
<dbReference type="eggNOG" id="KOG0586">
    <property type="taxonomic scope" value="Eukaryota"/>
</dbReference>
<dbReference type="HOGENOM" id="CLU_328583_0_0_1"/>
<dbReference type="InParanoid" id="Q55CW2"/>
<dbReference type="OMA" id="HTHENPQ"/>
<dbReference type="PRO" id="PR:Q55CW2"/>
<dbReference type="Proteomes" id="UP000002195">
    <property type="component" value="Chromosome 1"/>
</dbReference>
<dbReference type="GO" id="GO:0016020">
    <property type="term" value="C:membrane"/>
    <property type="evidence" value="ECO:0007669"/>
    <property type="project" value="UniProtKB-SubCell"/>
</dbReference>
<dbReference type="GO" id="GO:0005524">
    <property type="term" value="F:ATP binding"/>
    <property type="evidence" value="ECO:0007669"/>
    <property type="project" value="UniProtKB-KW"/>
</dbReference>
<dbReference type="GO" id="GO:0106310">
    <property type="term" value="F:protein serine kinase activity"/>
    <property type="evidence" value="ECO:0007669"/>
    <property type="project" value="RHEA"/>
</dbReference>
<dbReference type="GO" id="GO:0004674">
    <property type="term" value="F:protein serine/threonine kinase activity"/>
    <property type="evidence" value="ECO:0000318"/>
    <property type="project" value="GO_Central"/>
</dbReference>
<dbReference type="CDD" id="cd00180">
    <property type="entry name" value="PKc"/>
    <property type="match status" value="1"/>
</dbReference>
<dbReference type="FunFam" id="1.10.150.50:FF:000148">
    <property type="entry name" value="Probable serine/threonine-protein kinase samkC"/>
    <property type="match status" value="1"/>
</dbReference>
<dbReference type="Gene3D" id="1.10.150.50">
    <property type="entry name" value="Transcription Factor, Ets-1"/>
    <property type="match status" value="1"/>
</dbReference>
<dbReference type="Gene3D" id="1.10.510.10">
    <property type="entry name" value="Transferase(Phosphotransferase) domain 1"/>
    <property type="match status" value="1"/>
</dbReference>
<dbReference type="InterPro" id="IPR011009">
    <property type="entry name" value="Kinase-like_dom_sf"/>
</dbReference>
<dbReference type="InterPro" id="IPR000719">
    <property type="entry name" value="Prot_kinase_dom"/>
</dbReference>
<dbReference type="InterPro" id="IPR001660">
    <property type="entry name" value="SAM"/>
</dbReference>
<dbReference type="InterPro" id="IPR013761">
    <property type="entry name" value="SAM/pointed_sf"/>
</dbReference>
<dbReference type="PANTHER" id="PTHR36911:SF3">
    <property type="entry name" value="GATA ZINC FINGER DOMAIN-CONTAINING PROTEIN 4-RELATED"/>
    <property type="match status" value="1"/>
</dbReference>
<dbReference type="PANTHER" id="PTHR36911">
    <property type="entry name" value="LIM ZINC-BINDING DOMAIN-CONTAINING PROTEIN-RELATED"/>
    <property type="match status" value="1"/>
</dbReference>
<dbReference type="Pfam" id="PF00069">
    <property type="entry name" value="Pkinase"/>
    <property type="match status" value="1"/>
</dbReference>
<dbReference type="SUPFAM" id="SSF56112">
    <property type="entry name" value="Protein kinase-like (PK-like)"/>
    <property type="match status" value="1"/>
</dbReference>
<dbReference type="SUPFAM" id="SSF47769">
    <property type="entry name" value="SAM/Pointed domain"/>
    <property type="match status" value="1"/>
</dbReference>
<dbReference type="PROSITE" id="PS50011">
    <property type="entry name" value="PROTEIN_KINASE_DOM"/>
    <property type="match status" value="1"/>
</dbReference>
<dbReference type="PROSITE" id="PS50105">
    <property type="entry name" value="SAM_DOMAIN"/>
    <property type="match status" value="1"/>
</dbReference>
<keyword id="KW-0067">ATP-binding</keyword>
<keyword id="KW-0175">Coiled coil</keyword>
<keyword id="KW-0418">Kinase</keyword>
<keyword id="KW-0472">Membrane</keyword>
<keyword id="KW-0547">Nucleotide-binding</keyword>
<keyword id="KW-1185">Reference proteome</keyword>
<keyword id="KW-0723">Serine/threonine-protein kinase</keyword>
<keyword id="KW-0808">Transferase</keyword>
<keyword id="KW-0812">Transmembrane</keyword>
<keyword id="KW-1133">Transmembrane helix</keyword>
<proteinExistence type="inferred from homology"/>
<evidence type="ECO:0000255" key="1"/>
<evidence type="ECO:0000255" key="2">
    <source>
        <dbReference type="PROSITE-ProRule" id="PRU00159"/>
    </source>
</evidence>
<evidence type="ECO:0000255" key="3">
    <source>
        <dbReference type="PROSITE-ProRule" id="PRU00184"/>
    </source>
</evidence>
<evidence type="ECO:0000256" key="4">
    <source>
        <dbReference type="SAM" id="MobiDB-lite"/>
    </source>
</evidence>
<evidence type="ECO:0000305" key="5"/>